<name>FEMB_STAAS</name>
<gene>
    <name type="primary">femB</name>
    <name type="ordered locus">SAS1315</name>
</gene>
<reference key="1">
    <citation type="journal article" date="2004" name="Proc. Natl. Acad. Sci. U.S.A.">
        <title>Complete genomes of two clinical Staphylococcus aureus strains: evidence for the rapid evolution of virulence and drug resistance.</title>
        <authorList>
            <person name="Holden M.T.G."/>
            <person name="Feil E.J."/>
            <person name="Lindsay J.A."/>
            <person name="Peacock S.J."/>
            <person name="Day N.P.J."/>
            <person name="Enright M.C."/>
            <person name="Foster T.J."/>
            <person name="Moore C.E."/>
            <person name="Hurst L."/>
            <person name="Atkin R."/>
            <person name="Barron A."/>
            <person name="Bason N."/>
            <person name="Bentley S.D."/>
            <person name="Chillingworth C."/>
            <person name="Chillingworth T."/>
            <person name="Churcher C."/>
            <person name="Clark L."/>
            <person name="Corton C."/>
            <person name="Cronin A."/>
            <person name="Doggett J."/>
            <person name="Dowd L."/>
            <person name="Feltwell T."/>
            <person name="Hance Z."/>
            <person name="Harris B."/>
            <person name="Hauser H."/>
            <person name="Holroyd S."/>
            <person name="Jagels K."/>
            <person name="James K.D."/>
            <person name="Lennard N."/>
            <person name="Line A."/>
            <person name="Mayes R."/>
            <person name="Moule S."/>
            <person name="Mungall K."/>
            <person name="Ormond D."/>
            <person name="Quail M.A."/>
            <person name="Rabbinowitsch E."/>
            <person name="Rutherford K.M."/>
            <person name="Sanders M."/>
            <person name="Sharp S."/>
            <person name="Simmonds M."/>
            <person name="Stevens K."/>
            <person name="Whitehead S."/>
            <person name="Barrell B.G."/>
            <person name="Spratt B.G."/>
            <person name="Parkhill J."/>
        </authorList>
    </citation>
    <scope>NUCLEOTIDE SEQUENCE [LARGE SCALE GENOMIC DNA]</scope>
    <source>
        <strain>MSSA476</strain>
    </source>
</reference>
<sequence length="419" mass="49676">MKFTELTVTEFDNFVQNPSLESHYFQVKENIVTRENDGFEVVLLGIKDDNNKVIAASLFSKIPTMGSYVYYSNRGPVMDFSDLGLVDYYLKELDKYLQQHQCLYVKLDPYWLYHLYDKDIVPFEGREKNDALVNLFKSHGYEHHGFTTEYDTSSQVRWMGVLNLEGKTPETLKKTFDSQRKRNINKAINYGVKVRFLERDEFNLFLDLYRETEERAGFVSKTDDYFYNFIDTYGDKVLVPLAYIDLDEYVLKLQQELNDKENRRDQMMAKENKSDKQMKKIAELDKQIDHDQHELLNASELSKTDGPILNLASGVYFANAYEVNYFSGGSSEKYNQFMGPYMMHWFMINYCFDNGYDRYNFYGLSGDFTENSEDYGVYRFKRGFNVQIEELIGDFYKPIHKVKYWLFTTLDKLRKKLKK</sequence>
<dbReference type="EC" id="2.3.2.18"/>
<dbReference type="EMBL" id="BX571857">
    <property type="protein sequence ID" value="CAG43092.1"/>
    <property type="molecule type" value="Genomic_DNA"/>
</dbReference>
<dbReference type="RefSeq" id="WP_000673098.1">
    <property type="nucleotide sequence ID" value="NC_002953.3"/>
</dbReference>
<dbReference type="SMR" id="Q6G9I4"/>
<dbReference type="KEGG" id="sas:SAS1315"/>
<dbReference type="HOGENOM" id="CLU_048411_1_0_9"/>
<dbReference type="GO" id="GO:0005737">
    <property type="term" value="C:cytoplasm"/>
    <property type="evidence" value="ECO:0007669"/>
    <property type="project" value="UniProtKB-SubCell"/>
</dbReference>
<dbReference type="GO" id="GO:0016755">
    <property type="term" value="F:aminoacyltransferase activity"/>
    <property type="evidence" value="ECO:0007669"/>
    <property type="project" value="InterPro"/>
</dbReference>
<dbReference type="GO" id="GO:0071555">
    <property type="term" value="P:cell wall organization"/>
    <property type="evidence" value="ECO:0007669"/>
    <property type="project" value="UniProtKB-KW"/>
</dbReference>
<dbReference type="GO" id="GO:0009252">
    <property type="term" value="P:peptidoglycan biosynthetic process"/>
    <property type="evidence" value="ECO:0007669"/>
    <property type="project" value="UniProtKB-KW"/>
</dbReference>
<dbReference type="GO" id="GO:0008360">
    <property type="term" value="P:regulation of cell shape"/>
    <property type="evidence" value="ECO:0007669"/>
    <property type="project" value="UniProtKB-KW"/>
</dbReference>
<dbReference type="Gene3D" id="1.20.58.90">
    <property type="match status" value="1"/>
</dbReference>
<dbReference type="Gene3D" id="3.40.630.30">
    <property type="match status" value="2"/>
</dbReference>
<dbReference type="InterPro" id="IPR016181">
    <property type="entry name" value="Acyl_CoA_acyltransferase"/>
</dbReference>
<dbReference type="InterPro" id="IPR003447">
    <property type="entry name" value="FEMABX"/>
</dbReference>
<dbReference type="InterPro" id="IPR050644">
    <property type="entry name" value="PG_Glycine_Bridge_Synth"/>
</dbReference>
<dbReference type="PANTHER" id="PTHR36174:SF2">
    <property type="entry name" value="AMINOACYLTRANSFERASE FEMA"/>
    <property type="match status" value="1"/>
</dbReference>
<dbReference type="PANTHER" id="PTHR36174">
    <property type="entry name" value="LIPID II:GLYCINE GLYCYLTRANSFERASE"/>
    <property type="match status" value="1"/>
</dbReference>
<dbReference type="Pfam" id="PF02388">
    <property type="entry name" value="FemAB"/>
    <property type="match status" value="1"/>
</dbReference>
<dbReference type="SUPFAM" id="SSF55729">
    <property type="entry name" value="Acyl-CoA N-acyltransferases (Nat)"/>
    <property type="match status" value="2"/>
</dbReference>
<dbReference type="PROSITE" id="PS51191">
    <property type="entry name" value="FEMABX"/>
    <property type="match status" value="1"/>
</dbReference>
<keyword id="KW-0012">Acyltransferase</keyword>
<keyword id="KW-0133">Cell shape</keyword>
<keyword id="KW-0961">Cell wall biogenesis/degradation</keyword>
<keyword id="KW-0963">Cytoplasm</keyword>
<keyword id="KW-0573">Peptidoglycan synthesis</keyword>
<keyword id="KW-0808">Transferase</keyword>
<organism>
    <name type="scientific">Staphylococcus aureus (strain MSSA476)</name>
    <dbReference type="NCBI Taxonomy" id="282459"/>
    <lineage>
        <taxon>Bacteria</taxon>
        <taxon>Bacillati</taxon>
        <taxon>Bacillota</taxon>
        <taxon>Bacilli</taxon>
        <taxon>Bacillales</taxon>
        <taxon>Staphylococcaceae</taxon>
        <taxon>Staphylococcus</taxon>
    </lineage>
</organism>
<comment type="function">
    <text evidence="1">Catalyzes the formation of the pentaglycine interpeptide bridge, which is characteristic of the S.aureus peptidoglycan. Adds glycines 4 and 5 of the pentaglycine bridge, using glycyl-tRNA(Gly) as donor (By similarity).</text>
</comment>
<comment type="catalytic activity">
    <reaction>
        <text>MurNAc-L-Ala-D-isoglutaminyl-L-Lys-(N(6)-tri-Gly)-D-Ala-D-Ala-diphospho-di-trans,octa-cis-undecaprenyl-GlcNAc + 2 glycyl-tRNA(Gly) = MurNAc-L-Ala-D-isoglutaminyl-L-Lys-(N(6)-penta-Gly)-D-Ala-D-Ala-diphospho-di-trans,octa-cis-undecaprenyl-GlcNAc + 2 tRNA(Gly) + 2 H(+)</text>
        <dbReference type="Rhea" id="RHEA:30443"/>
        <dbReference type="Rhea" id="RHEA-COMP:9664"/>
        <dbReference type="Rhea" id="RHEA-COMP:9683"/>
        <dbReference type="ChEBI" id="CHEBI:15378"/>
        <dbReference type="ChEBI" id="CHEBI:62235"/>
        <dbReference type="ChEBI" id="CHEBI:62236"/>
        <dbReference type="ChEBI" id="CHEBI:78442"/>
        <dbReference type="ChEBI" id="CHEBI:78522"/>
        <dbReference type="EC" id="2.3.2.18"/>
    </reaction>
</comment>
<comment type="subunit">
    <text evidence="1">Homodimer. Interacts with FemA (By similarity).</text>
</comment>
<comment type="subcellular location">
    <subcellularLocation>
        <location evidence="1">Cytoplasm</location>
    </subcellularLocation>
</comment>
<comment type="similarity">
    <text evidence="2">Belongs to the FemABX family.</text>
</comment>
<accession>Q6G9I4</accession>
<feature type="chain" id="PRO_0000204742" description="Aminoacyltransferase FemB">
    <location>
        <begin position="1"/>
        <end position="419"/>
    </location>
</feature>
<protein>
    <recommendedName>
        <fullName>Aminoacyltransferase FemB</fullName>
        <ecNumber>2.3.2.18</ecNumber>
    </recommendedName>
    <alternativeName>
        <fullName>Factor essential for expression of methicillin resistance B</fullName>
    </alternativeName>
    <alternativeName>
        <fullName>N-acetylmuramoyl-L-alanyl-D-glutamyl-L-lysyl-(N6-triglycine)-D-alanyl-D-alanine-diphosphoundecaprenyl-N-acetylglucosamine:glycine glycyltransferase</fullName>
    </alternativeName>
</protein>
<evidence type="ECO:0000250" key="1"/>
<evidence type="ECO:0000305" key="2"/>
<proteinExistence type="inferred from homology"/>